<keyword id="KW-1185">Reference proteome</keyword>
<keyword id="KW-0687">Ribonucleoprotein</keyword>
<keyword id="KW-0689">Ribosomal protein</keyword>
<keyword id="KW-0694">RNA-binding</keyword>
<keyword id="KW-0699">rRNA-binding</keyword>
<comment type="function">
    <text evidence="1">Binds directly to 23S ribosomal RNA and is necessary for the in vitro assembly process of the 50S ribosomal subunit. It is not involved in the protein synthesizing functions of that subunit.</text>
</comment>
<comment type="similarity">
    <text evidence="1">Belongs to the bacterial ribosomal protein bL20 family.</text>
</comment>
<gene>
    <name evidence="1" type="primary">rplT</name>
    <name type="ordered locus">SF1515</name>
    <name type="ordered locus">S1633</name>
</gene>
<sequence>MARVKRGVIARARHKKILKQAKGYYGARSRVYRVAFQAVIKAGQYAYRDRRQRKRQFRQLWIARINAAARQNGISYSKFINGLKKASVEIDRKILADIAVFDKVAFTTLVEKAKAALA</sequence>
<dbReference type="EMBL" id="AE005674">
    <property type="protein sequence ID" value="AAN43105.1"/>
    <property type="molecule type" value="Genomic_DNA"/>
</dbReference>
<dbReference type="EMBL" id="AE014073">
    <property type="protein sequence ID" value="AAP16995.1"/>
    <property type="molecule type" value="Genomic_DNA"/>
</dbReference>
<dbReference type="RefSeq" id="NP_707398.1">
    <property type="nucleotide sequence ID" value="NC_004337.2"/>
</dbReference>
<dbReference type="RefSeq" id="WP_000124854.1">
    <property type="nucleotide sequence ID" value="NZ_WPGW01000051.1"/>
</dbReference>
<dbReference type="SMR" id="Q83RG1"/>
<dbReference type="STRING" id="198214.SF1515"/>
<dbReference type="PaxDb" id="198214-SF1515"/>
<dbReference type="GeneID" id="1024687"/>
<dbReference type="KEGG" id="sfl:SF1515"/>
<dbReference type="KEGG" id="sfx:S1633"/>
<dbReference type="PATRIC" id="fig|198214.7.peg.1791"/>
<dbReference type="HOGENOM" id="CLU_123265_0_1_6"/>
<dbReference type="Proteomes" id="UP000001006">
    <property type="component" value="Chromosome"/>
</dbReference>
<dbReference type="Proteomes" id="UP000002673">
    <property type="component" value="Chromosome"/>
</dbReference>
<dbReference type="GO" id="GO:1990904">
    <property type="term" value="C:ribonucleoprotein complex"/>
    <property type="evidence" value="ECO:0007669"/>
    <property type="project" value="UniProtKB-KW"/>
</dbReference>
<dbReference type="GO" id="GO:0005840">
    <property type="term" value="C:ribosome"/>
    <property type="evidence" value="ECO:0007669"/>
    <property type="project" value="UniProtKB-KW"/>
</dbReference>
<dbReference type="GO" id="GO:0019843">
    <property type="term" value="F:rRNA binding"/>
    <property type="evidence" value="ECO:0007669"/>
    <property type="project" value="UniProtKB-UniRule"/>
</dbReference>
<dbReference type="GO" id="GO:0003735">
    <property type="term" value="F:structural constituent of ribosome"/>
    <property type="evidence" value="ECO:0007669"/>
    <property type="project" value="InterPro"/>
</dbReference>
<dbReference type="GO" id="GO:0000027">
    <property type="term" value="P:ribosomal large subunit assembly"/>
    <property type="evidence" value="ECO:0007669"/>
    <property type="project" value="UniProtKB-UniRule"/>
</dbReference>
<dbReference type="GO" id="GO:0006412">
    <property type="term" value="P:translation"/>
    <property type="evidence" value="ECO:0007669"/>
    <property type="project" value="InterPro"/>
</dbReference>
<dbReference type="CDD" id="cd07026">
    <property type="entry name" value="Ribosomal_L20"/>
    <property type="match status" value="1"/>
</dbReference>
<dbReference type="FunFam" id="1.10.1900.20:FF:000001">
    <property type="entry name" value="50S ribosomal protein L20"/>
    <property type="match status" value="1"/>
</dbReference>
<dbReference type="Gene3D" id="6.10.160.10">
    <property type="match status" value="1"/>
</dbReference>
<dbReference type="Gene3D" id="1.10.1900.20">
    <property type="entry name" value="Ribosomal protein L20"/>
    <property type="match status" value="1"/>
</dbReference>
<dbReference type="HAMAP" id="MF_00382">
    <property type="entry name" value="Ribosomal_bL20"/>
    <property type="match status" value="1"/>
</dbReference>
<dbReference type="InterPro" id="IPR005813">
    <property type="entry name" value="Ribosomal_bL20"/>
</dbReference>
<dbReference type="InterPro" id="IPR049946">
    <property type="entry name" value="RIBOSOMAL_L20_CS"/>
</dbReference>
<dbReference type="InterPro" id="IPR035566">
    <property type="entry name" value="Ribosomal_protein_bL20_C"/>
</dbReference>
<dbReference type="NCBIfam" id="TIGR01032">
    <property type="entry name" value="rplT_bact"/>
    <property type="match status" value="1"/>
</dbReference>
<dbReference type="PANTHER" id="PTHR10986">
    <property type="entry name" value="39S RIBOSOMAL PROTEIN L20"/>
    <property type="match status" value="1"/>
</dbReference>
<dbReference type="Pfam" id="PF00453">
    <property type="entry name" value="Ribosomal_L20"/>
    <property type="match status" value="1"/>
</dbReference>
<dbReference type="PRINTS" id="PR00062">
    <property type="entry name" value="RIBOSOMALL20"/>
</dbReference>
<dbReference type="SUPFAM" id="SSF74731">
    <property type="entry name" value="Ribosomal protein L20"/>
    <property type="match status" value="1"/>
</dbReference>
<dbReference type="PROSITE" id="PS00937">
    <property type="entry name" value="RIBOSOMAL_L20"/>
    <property type="match status" value="1"/>
</dbReference>
<proteinExistence type="inferred from homology"/>
<name>RL20_SHIFL</name>
<protein>
    <recommendedName>
        <fullName evidence="1">Large ribosomal subunit protein bL20</fullName>
    </recommendedName>
    <alternativeName>
        <fullName evidence="2">50S ribosomal protein L20</fullName>
    </alternativeName>
</protein>
<organism>
    <name type="scientific">Shigella flexneri</name>
    <dbReference type="NCBI Taxonomy" id="623"/>
    <lineage>
        <taxon>Bacteria</taxon>
        <taxon>Pseudomonadati</taxon>
        <taxon>Pseudomonadota</taxon>
        <taxon>Gammaproteobacteria</taxon>
        <taxon>Enterobacterales</taxon>
        <taxon>Enterobacteriaceae</taxon>
        <taxon>Shigella</taxon>
    </lineage>
</organism>
<evidence type="ECO:0000255" key="1">
    <source>
        <dbReference type="HAMAP-Rule" id="MF_00382"/>
    </source>
</evidence>
<evidence type="ECO:0000305" key="2"/>
<accession>Q83RG1</accession>
<feature type="chain" id="PRO_0000177222" description="Large ribosomal subunit protein bL20">
    <location>
        <begin position="1"/>
        <end position="118"/>
    </location>
</feature>
<reference key="1">
    <citation type="journal article" date="2002" name="Nucleic Acids Res.">
        <title>Genome sequence of Shigella flexneri 2a: insights into pathogenicity through comparison with genomes of Escherichia coli K12 and O157.</title>
        <authorList>
            <person name="Jin Q."/>
            <person name="Yuan Z."/>
            <person name="Xu J."/>
            <person name="Wang Y."/>
            <person name="Shen Y."/>
            <person name="Lu W."/>
            <person name="Wang J."/>
            <person name="Liu H."/>
            <person name="Yang J."/>
            <person name="Yang F."/>
            <person name="Zhang X."/>
            <person name="Zhang J."/>
            <person name="Yang G."/>
            <person name="Wu H."/>
            <person name="Qu D."/>
            <person name="Dong J."/>
            <person name="Sun L."/>
            <person name="Xue Y."/>
            <person name="Zhao A."/>
            <person name="Gao Y."/>
            <person name="Zhu J."/>
            <person name="Kan B."/>
            <person name="Ding K."/>
            <person name="Chen S."/>
            <person name="Cheng H."/>
            <person name="Yao Z."/>
            <person name="He B."/>
            <person name="Chen R."/>
            <person name="Ma D."/>
            <person name="Qiang B."/>
            <person name="Wen Y."/>
            <person name="Hou Y."/>
            <person name="Yu J."/>
        </authorList>
    </citation>
    <scope>NUCLEOTIDE SEQUENCE [LARGE SCALE GENOMIC DNA]</scope>
    <source>
        <strain>301 / Serotype 2a</strain>
    </source>
</reference>
<reference key="2">
    <citation type="journal article" date="2003" name="Infect. Immun.">
        <title>Complete genome sequence and comparative genomics of Shigella flexneri serotype 2a strain 2457T.</title>
        <authorList>
            <person name="Wei J."/>
            <person name="Goldberg M.B."/>
            <person name="Burland V."/>
            <person name="Venkatesan M.M."/>
            <person name="Deng W."/>
            <person name="Fournier G."/>
            <person name="Mayhew G.F."/>
            <person name="Plunkett G. III"/>
            <person name="Rose D.J."/>
            <person name="Darling A."/>
            <person name="Mau B."/>
            <person name="Perna N.T."/>
            <person name="Payne S.M."/>
            <person name="Runyen-Janecky L.J."/>
            <person name="Zhou S."/>
            <person name="Schwartz D.C."/>
            <person name="Blattner F.R."/>
        </authorList>
    </citation>
    <scope>NUCLEOTIDE SEQUENCE [LARGE SCALE GENOMIC DNA]</scope>
    <source>
        <strain>ATCC 700930 / 2457T / Serotype 2a</strain>
    </source>
</reference>